<reference key="1">
    <citation type="journal article" date="2008" name="Genome Res.">
        <title>Comparative genome analysis of Salmonella enteritidis PT4 and Salmonella gallinarum 287/91 provides insights into evolutionary and host adaptation pathways.</title>
        <authorList>
            <person name="Thomson N.R."/>
            <person name="Clayton D.J."/>
            <person name="Windhorst D."/>
            <person name="Vernikos G."/>
            <person name="Davidson S."/>
            <person name="Churcher C."/>
            <person name="Quail M.A."/>
            <person name="Stevens M."/>
            <person name="Jones M.A."/>
            <person name="Watson M."/>
            <person name="Barron A."/>
            <person name="Layton A."/>
            <person name="Pickard D."/>
            <person name="Kingsley R.A."/>
            <person name="Bignell A."/>
            <person name="Clark L."/>
            <person name="Harris B."/>
            <person name="Ormond D."/>
            <person name="Abdellah Z."/>
            <person name="Brooks K."/>
            <person name="Cherevach I."/>
            <person name="Chillingworth T."/>
            <person name="Woodward J."/>
            <person name="Norberczak H."/>
            <person name="Lord A."/>
            <person name="Arrowsmith C."/>
            <person name="Jagels K."/>
            <person name="Moule S."/>
            <person name="Mungall K."/>
            <person name="Saunders M."/>
            <person name="Whitehead S."/>
            <person name="Chabalgoity J.A."/>
            <person name="Maskell D."/>
            <person name="Humphreys T."/>
            <person name="Roberts M."/>
            <person name="Barrow P.A."/>
            <person name="Dougan G."/>
            <person name="Parkhill J."/>
        </authorList>
    </citation>
    <scope>NUCLEOTIDE SEQUENCE [LARGE SCALE GENOMIC DNA]</scope>
    <source>
        <strain>287/91 / NCTC 13346</strain>
    </source>
</reference>
<accession>B5RFQ9</accession>
<keyword id="KW-0328">Glycosyltransferase</keyword>
<keyword id="KW-0808">Transferase</keyword>
<sequence length="246" mass="27599">MTNNAAAPLYSLRGLPLIGWRDMSHALNYLFADGQLKQGTLVAINAEKLLTAEDNPEVRALIAAAEFKYADGISVVRSIRKKFPQAQVSRVAGADLWEALMARAGKEGTPVFLVGGKPEVLAQTEAKLRTQWNVNIVGSQDGYFTPEQRQALFARIHASGAKIVTVAMGSPKQELLMRDCREVHPHALYMGVGGTYDVFTGHVKRAPKIWQNLGLEWLYRLLSQPRRITRQMRLLRYLRWHYTGDL</sequence>
<protein>
    <recommendedName>
        <fullName evidence="1">UDP-N-acetyl-D-mannosaminuronic acid transferase</fullName>
        <shortName evidence="1">UDP-ManNAcA transferase</shortName>
        <ecNumber evidence="1">2.4.1.180</ecNumber>
    </recommendedName>
</protein>
<gene>
    <name evidence="1" type="primary">wecG</name>
    <name evidence="1" type="synonym">rffM</name>
    <name type="ordered locus">SG3514</name>
</gene>
<name>WECG_SALG2</name>
<evidence type="ECO:0000255" key="1">
    <source>
        <dbReference type="HAMAP-Rule" id="MF_01001"/>
    </source>
</evidence>
<feature type="chain" id="PRO_1000134585" description="UDP-N-acetyl-D-mannosaminuronic acid transferase">
    <location>
        <begin position="1"/>
        <end position="246"/>
    </location>
</feature>
<dbReference type="EC" id="2.4.1.180" evidence="1"/>
<dbReference type="EMBL" id="AM933173">
    <property type="protein sequence ID" value="CAR39303.1"/>
    <property type="molecule type" value="Genomic_DNA"/>
</dbReference>
<dbReference type="RefSeq" id="WP_000183621.1">
    <property type="nucleotide sequence ID" value="NC_011274.1"/>
</dbReference>
<dbReference type="SMR" id="B5RFQ9"/>
<dbReference type="CAZy" id="GT26">
    <property type="family name" value="Glycosyltransferase Family 26"/>
</dbReference>
<dbReference type="KEGG" id="seg:SG3514"/>
<dbReference type="HOGENOM" id="CLU_063203_3_2_6"/>
<dbReference type="UniPathway" id="UPA00566"/>
<dbReference type="Proteomes" id="UP000008321">
    <property type="component" value="Chromosome"/>
</dbReference>
<dbReference type="GO" id="GO:0047241">
    <property type="term" value="F:lipopolysaccharide N-acetylmannosaminouronosyltransferase activity"/>
    <property type="evidence" value="ECO:0007669"/>
    <property type="project" value="UniProtKB-UniRule"/>
</dbReference>
<dbReference type="GO" id="GO:0009246">
    <property type="term" value="P:enterobacterial common antigen biosynthetic process"/>
    <property type="evidence" value="ECO:0007669"/>
    <property type="project" value="UniProtKB-UniRule"/>
</dbReference>
<dbReference type="CDD" id="cd06533">
    <property type="entry name" value="Glyco_transf_WecG_TagA"/>
    <property type="match status" value="1"/>
</dbReference>
<dbReference type="HAMAP" id="MF_01001">
    <property type="entry name" value="WecG_RffM"/>
    <property type="match status" value="1"/>
</dbReference>
<dbReference type="InterPro" id="IPR023085">
    <property type="entry name" value="UDP-ManNAcA_Trfase_WecG"/>
</dbReference>
<dbReference type="InterPro" id="IPR004629">
    <property type="entry name" value="WecG_TagA_CpsF"/>
</dbReference>
<dbReference type="NCBIfam" id="NF002980">
    <property type="entry name" value="PRK03692.1"/>
    <property type="match status" value="1"/>
</dbReference>
<dbReference type="NCBIfam" id="TIGR00696">
    <property type="entry name" value="wecG_tagA_cpsF"/>
    <property type="match status" value="1"/>
</dbReference>
<dbReference type="PANTHER" id="PTHR34136">
    <property type="match status" value="1"/>
</dbReference>
<dbReference type="PANTHER" id="PTHR34136:SF1">
    <property type="entry name" value="UDP-N-ACETYL-D-MANNOSAMINURONIC ACID TRANSFERASE"/>
    <property type="match status" value="1"/>
</dbReference>
<dbReference type="Pfam" id="PF03808">
    <property type="entry name" value="Glyco_tran_WecG"/>
    <property type="match status" value="1"/>
</dbReference>
<comment type="function">
    <text evidence="1">Catalyzes the synthesis of Und-PP-GlcNAc-ManNAcA (Lipid II), the second lipid-linked intermediate involved in enterobacterial common antigen (ECA) synthesis.</text>
</comment>
<comment type="catalytic activity">
    <reaction evidence="1">
        <text>UDP-N-acetyl-alpha-D-mannosaminouronate + N-acetyl-alpha-D-glucosaminyl-di-trans,octa-cis-undecaprenyl diphosphate = beta-D-ManNAcA-(1-&gt;4)-alpha-D-GlcNAc-di-trans,octa-cis-undecaprenyl diphosphate + UDP + H(+)</text>
        <dbReference type="Rhea" id="RHEA:28366"/>
        <dbReference type="ChEBI" id="CHEBI:15378"/>
        <dbReference type="ChEBI" id="CHEBI:58223"/>
        <dbReference type="ChEBI" id="CHEBI:61495"/>
        <dbReference type="ChEBI" id="CHEBI:62959"/>
        <dbReference type="ChEBI" id="CHEBI:70731"/>
        <dbReference type="EC" id="2.4.1.180"/>
    </reaction>
</comment>
<comment type="pathway">
    <text evidence="1">Bacterial outer membrane biogenesis; enterobacterial common antigen biosynthesis.</text>
</comment>
<comment type="similarity">
    <text evidence="1">Belongs to the glycosyltransferase 26 family.</text>
</comment>
<proteinExistence type="inferred from homology"/>
<organism>
    <name type="scientific">Salmonella gallinarum (strain 287/91 / NCTC 13346)</name>
    <dbReference type="NCBI Taxonomy" id="550538"/>
    <lineage>
        <taxon>Bacteria</taxon>
        <taxon>Pseudomonadati</taxon>
        <taxon>Pseudomonadota</taxon>
        <taxon>Gammaproteobacteria</taxon>
        <taxon>Enterobacterales</taxon>
        <taxon>Enterobacteriaceae</taxon>
        <taxon>Salmonella</taxon>
    </lineage>
</organism>